<proteinExistence type="inferred from homology"/>
<gene>
    <name evidence="1" type="primary">rps3ae</name>
    <name type="synonym">rps3e</name>
    <name type="ordered locus">VNG_0787G</name>
</gene>
<comment type="similarity">
    <text evidence="1">Belongs to the eukaryotic ribosomal protein eS1 family.</text>
</comment>
<name>RS3A_HALSA</name>
<accession>Q9HRA5</accession>
<evidence type="ECO:0000255" key="1">
    <source>
        <dbReference type="HAMAP-Rule" id="MF_00359"/>
    </source>
</evidence>
<evidence type="ECO:0000305" key="2"/>
<feature type="chain" id="PRO_0000153546" description="Small ribosomal subunit protein eS1">
    <location>
        <begin position="1"/>
        <end position="206"/>
    </location>
</feature>
<organism>
    <name type="scientific">Halobacterium salinarum (strain ATCC 700922 / JCM 11081 / NRC-1)</name>
    <name type="common">Halobacterium halobium</name>
    <dbReference type="NCBI Taxonomy" id="64091"/>
    <lineage>
        <taxon>Archaea</taxon>
        <taxon>Methanobacteriati</taxon>
        <taxon>Methanobacteriota</taxon>
        <taxon>Stenosarchaea group</taxon>
        <taxon>Halobacteria</taxon>
        <taxon>Halobacteriales</taxon>
        <taxon>Halobacteriaceae</taxon>
        <taxon>Halobacterium</taxon>
        <taxon>Halobacterium salinarum NRC-34001</taxon>
    </lineage>
</organism>
<keyword id="KW-1185">Reference proteome</keyword>
<keyword id="KW-0687">Ribonucleoprotein</keyword>
<keyword id="KW-0689">Ribosomal protein</keyword>
<protein>
    <recommendedName>
        <fullName evidence="1">Small ribosomal subunit protein eS1</fullName>
    </recommendedName>
    <alternativeName>
        <fullName evidence="2">30S ribosomal protein S3Ae</fullName>
    </alternativeName>
    <alternativeName>
        <fullName evidence="1">Ribosomal protein S1e</fullName>
    </alternativeName>
</protein>
<sequence>MSERSVSKQDQEKRWYTVLAPEEFDRAELGETLAEEPDQVYDRTIQAALSDVRDGGDNNIKLTFQIDDVGSDSASTQFVQAELTRDYQRSLVRRGSSKVAVTVTVLTTDDYRVRIQPVAYTTKQADQSQQHAIRRTMIDLVEEAGEERTFEALLNSIIEGRLSSAIYDEANTIYPLRRVEVEKATLEAHPEEVHEEEETAVDFSGE</sequence>
<reference key="1">
    <citation type="journal article" date="2000" name="Proc. Natl. Acad. Sci. U.S.A.">
        <title>Genome sequence of Halobacterium species NRC-1.</title>
        <authorList>
            <person name="Ng W.V."/>
            <person name="Kennedy S.P."/>
            <person name="Mahairas G.G."/>
            <person name="Berquist B."/>
            <person name="Pan M."/>
            <person name="Shukla H.D."/>
            <person name="Lasky S.R."/>
            <person name="Baliga N.S."/>
            <person name="Thorsson V."/>
            <person name="Sbrogna J."/>
            <person name="Swartzell S."/>
            <person name="Weir D."/>
            <person name="Hall J."/>
            <person name="Dahl T.A."/>
            <person name="Welti R."/>
            <person name="Goo Y.A."/>
            <person name="Leithauser B."/>
            <person name="Keller K."/>
            <person name="Cruz R."/>
            <person name="Danson M.J."/>
            <person name="Hough D.W."/>
            <person name="Maddocks D.G."/>
            <person name="Jablonski P.E."/>
            <person name="Krebs M.P."/>
            <person name="Angevine C.M."/>
            <person name="Dale H."/>
            <person name="Isenbarger T.A."/>
            <person name="Peck R.F."/>
            <person name="Pohlschroder M."/>
            <person name="Spudich J.L."/>
            <person name="Jung K.-H."/>
            <person name="Alam M."/>
            <person name="Freitas T."/>
            <person name="Hou S."/>
            <person name="Daniels C.J."/>
            <person name="Dennis P.P."/>
            <person name="Omer A.D."/>
            <person name="Ebhardt H."/>
            <person name="Lowe T.M."/>
            <person name="Liang P."/>
            <person name="Riley M."/>
            <person name="Hood L."/>
            <person name="DasSarma S."/>
        </authorList>
    </citation>
    <scope>NUCLEOTIDE SEQUENCE [LARGE SCALE GENOMIC DNA]</scope>
    <source>
        <strain>ATCC 700922 / JCM 11081 / NRC-1</strain>
    </source>
</reference>
<dbReference type="EMBL" id="AE004437">
    <property type="protein sequence ID" value="AAG19253.1"/>
    <property type="molecule type" value="Genomic_DNA"/>
</dbReference>
<dbReference type="PIR" id="A84236">
    <property type="entry name" value="A84236"/>
</dbReference>
<dbReference type="RefSeq" id="WP_010902549.1">
    <property type="nucleotide sequence ID" value="NC_002607.1"/>
</dbReference>
<dbReference type="SMR" id="Q9HRA5"/>
<dbReference type="FunCoup" id="Q9HRA5">
    <property type="interactions" value="129"/>
</dbReference>
<dbReference type="STRING" id="64091.VNG_0787G"/>
<dbReference type="PaxDb" id="64091-VNG_0787G"/>
<dbReference type="KEGG" id="hal:VNG_0787G"/>
<dbReference type="PATRIC" id="fig|64091.14.peg.604"/>
<dbReference type="HOGENOM" id="CLU_062507_1_0_2"/>
<dbReference type="InParanoid" id="Q9HRA5"/>
<dbReference type="OrthoDB" id="30639at2157"/>
<dbReference type="PhylomeDB" id="Q9HRA5"/>
<dbReference type="Proteomes" id="UP000000554">
    <property type="component" value="Chromosome"/>
</dbReference>
<dbReference type="GO" id="GO:0005829">
    <property type="term" value="C:cytosol"/>
    <property type="evidence" value="ECO:0000318"/>
    <property type="project" value="GO_Central"/>
</dbReference>
<dbReference type="GO" id="GO:1990904">
    <property type="term" value="C:ribonucleoprotein complex"/>
    <property type="evidence" value="ECO:0007669"/>
    <property type="project" value="UniProtKB-KW"/>
</dbReference>
<dbReference type="GO" id="GO:0005840">
    <property type="term" value="C:ribosome"/>
    <property type="evidence" value="ECO:0007669"/>
    <property type="project" value="UniProtKB-KW"/>
</dbReference>
<dbReference type="GO" id="GO:0003735">
    <property type="term" value="F:structural constituent of ribosome"/>
    <property type="evidence" value="ECO:0007669"/>
    <property type="project" value="InterPro"/>
</dbReference>
<dbReference type="GO" id="GO:0006412">
    <property type="term" value="P:translation"/>
    <property type="evidence" value="ECO:0007669"/>
    <property type="project" value="UniProtKB-UniRule"/>
</dbReference>
<dbReference type="HAMAP" id="MF_00359">
    <property type="entry name" value="Ribosomal_eS1"/>
    <property type="match status" value="1"/>
</dbReference>
<dbReference type="InterPro" id="IPR001593">
    <property type="entry name" value="Ribosomal_eS1"/>
</dbReference>
<dbReference type="InterPro" id="IPR030838">
    <property type="entry name" value="Ribosomal_eS1_arc"/>
</dbReference>
<dbReference type="NCBIfam" id="NF003142">
    <property type="entry name" value="PRK04057.1"/>
    <property type="match status" value="1"/>
</dbReference>
<dbReference type="PANTHER" id="PTHR11830">
    <property type="entry name" value="40S RIBOSOMAL PROTEIN S3A"/>
    <property type="match status" value="1"/>
</dbReference>
<dbReference type="Pfam" id="PF01015">
    <property type="entry name" value="Ribosomal_S3Ae"/>
    <property type="match status" value="1"/>
</dbReference>
<dbReference type="SMART" id="SM01397">
    <property type="entry name" value="Ribosomal_S3Ae"/>
    <property type="match status" value="1"/>
</dbReference>